<organism>
    <name type="scientific">Streptosporangium roseum (strain ATCC 12428 / DSM 43021 / JCM 3005 / KCTC 9067 / NCIMB 10171 / NRRL 2505 / NI 9100)</name>
    <dbReference type="NCBI Taxonomy" id="479432"/>
    <lineage>
        <taxon>Bacteria</taxon>
        <taxon>Bacillati</taxon>
        <taxon>Actinomycetota</taxon>
        <taxon>Actinomycetes</taxon>
        <taxon>Streptosporangiales</taxon>
        <taxon>Streptosporangiaceae</taxon>
        <taxon>Streptosporangium</taxon>
    </lineage>
</organism>
<name>MSHD_STRRD</name>
<comment type="function">
    <text evidence="1">Catalyzes the transfer of acetyl from acetyl-CoA to desacetylmycothiol (Cys-GlcN-Ins) to form mycothiol.</text>
</comment>
<comment type="catalytic activity">
    <reaction evidence="1">
        <text>1D-myo-inositol 2-(L-cysteinylamino)-2-deoxy-alpha-D-glucopyranoside + acetyl-CoA = mycothiol + CoA + H(+)</text>
        <dbReference type="Rhea" id="RHEA:26172"/>
        <dbReference type="ChEBI" id="CHEBI:15378"/>
        <dbReference type="ChEBI" id="CHEBI:16768"/>
        <dbReference type="ChEBI" id="CHEBI:57287"/>
        <dbReference type="ChEBI" id="CHEBI:57288"/>
        <dbReference type="ChEBI" id="CHEBI:58887"/>
        <dbReference type="EC" id="2.3.1.189"/>
    </reaction>
</comment>
<comment type="subunit">
    <text evidence="1">Monomer.</text>
</comment>
<comment type="similarity">
    <text evidence="1">Belongs to the acetyltransferase family. MshD subfamily.</text>
</comment>
<evidence type="ECO:0000255" key="1">
    <source>
        <dbReference type="HAMAP-Rule" id="MF_01698"/>
    </source>
</evidence>
<evidence type="ECO:0000256" key="2">
    <source>
        <dbReference type="SAM" id="MobiDB-lite"/>
    </source>
</evidence>
<dbReference type="EC" id="2.3.1.189" evidence="1"/>
<dbReference type="EMBL" id="CP001814">
    <property type="protein sequence ID" value="ACZ83898.1"/>
    <property type="molecule type" value="Genomic_DNA"/>
</dbReference>
<dbReference type="RefSeq" id="WP_012887644.1">
    <property type="nucleotide sequence ID" value="NC_013595.1"/>
</dbReference>
<dbReference type="SMR" id="D2B7W7"/>
<dbReference type="STRING" id="479432.Sros_0893"/>
<dbReference type="KEGG" id="sro:Sros_0893"/>
<dbReference type="eggNOG" id="COG0454">
    <property type="taxonomic scope" value="Bacteria"/>
</dbReference>
<dbReference type="eggNOG" id="COG0456">
    <property type="taxonomic scope" value="Bacteria"/>
</dbReference>
<dbReference type="HOGENOM" id="CLU_068014_0_0_11"/>
<dbReference type="OrthoDB" id="3208058at2"/>
<dbReference type="Proteomes" id="UP000002029">
    <property type="component" value="Chromosome"/>
</dbReference>
<dbReference type="GO" id="GO:0035447">
    <property type="term" value="F:mycothiol synthase activity"/>
    <property type="evidence" value="ECO:0007669"/>
    <property type="project" value="UniProtKB-UniRule"/>
</dbReference>
<dbReference type="GO" id="GO:0010125">
    <property type="term" value="P:mycothiol biosynthetic process"/>
    <property type="evidence" value="ECO:0007669"/>
    <property type="project" value="UniProtKB-UniRule"/>
</dbReference>
<dbReference type="CDD" id="cd04301">
    <property type="entry name" value="NAT_SF"/>
    <property type="match status" value="2"/>
</dbReference>
<dbReference type="Gene3D" id="3.40.630.30">
    <property type="match status" value="1"/>
</dbReference>
<dbReference type="HAMAP" id="MF_01698">
    <property type="entry name" value="MshD"/>
    <property type="match status" value="1"/>
</dbReference>
<dbReference type="InterPro" id="IPR016181">
    <property type="entry name" value="Acyl_CoA_acyltransferase"/>
</dbReference>
<dbReference type="InterPro" id="IPR000182">
    <property type="entry name" value="GNAT_dom"/>
</dbReference>
<dbReference type="InterPro" id="IPR017813">
    <property type="entry name" value="Mycothiol_AcTrfase"/>
</dbReference>
<dbReference type="InterPro" id="IPR050680">
    <property type="entry name" value="YpeA/RimI_acetyltransf"/>
</dbReference>
<dbReference type="NCBIfam" id="TIGR03448">
    <property type="entry name" value="mycothiol_MshD"/>
    <property type="match status" value="1"/>
</dbReference>
<dbReference type="PANTHER" id="PTHR43420">
    <property type="entry name" value="ACETYLTRANSFERASE"/>
    <property type="match status" value="1"/>
</dbReference>
<dbReference type="PANTHER" id="PTHR43420:SF12">
    <property type="entry name" value="N-ACETYLTRANSFERASE DOMAIN-CONTAINING PROTEIN"/>
    <property type="match status" value="1"/>
</dbReference>
<dbReference type="Pfam" id="PF00583">
    <property type="entry name" value="Acetyltransf_1"/>
    <property type="match status" value="2"/>
</dbReference>
<dbReference type="PIRSF" id="PIRSF021524">
    <property type="entry name" value="MSH_acetyltransferase"/>
    <property type="match status" value="1"/>
</dbReference>
<dbReference type="SUPFAM" id="SSF55729">
    <property type="entry name" value="Acyl-CoA N-acyltransferases (Nat)"/>
    <property type="match status" value="1"/>
</dbReference>
<dbReference type="PROSITE" id="PS51186">
    <property type="entry name" value="GNAT"/>
    <property type="match status" value="2"/>
</dbReference>
<feature type="chain" id="PRO_0000400306" description="Mycothiol acetyltransferase">
    <location>
        <begin position="1"/>
        <end position="337"/>
    </location>
</feature>
<feature type="domain" description="N-acetyltransferase 1" evidence="1">
    <location>
        <begin position="11"/>
        <end position="151"/>
    </location>
</feature>
<feature type="domain" description="N-acetyltransferase 2" evidence="1">
    <location>
        <begin position="154"/>
        <end position="337"/>
    </location>
</feature>
<feature type="region of interest" description="Disordered" evidence="2">
    <location>
        <begin position="210"/>
        <end position="246"/>
    </location>
</feature>
<feature type="compositionally biased region" description="Low complexity" evidence="2">
    <location>
        <begin position="221"/>
        <end position="234"/>
    </location>
</feature>
<feature type="compositionally biased region" description="Gly residues" evidence="2">
    <location>
        <begin position="235"/>
        <end position="246"/>
    </location>
</feature>
<feature type="binding site" evidence="1">
    <location>
        <position position="37"/>
    </location>
    <ligand>
        <name>1D-myo-inositol 2-(L-cysteinylamino)-2-deoxy-alpha-D-glucopyranoside</name>
        <dbReference type="ChEBI" id="CHEBI:58887"/>
    </ligand>
</feature>
<feature type="binding site" evidence="1">
    <location>
        <begin position="81"/>
        <end position="83"/>
    </location>
    <ligand>
        <name>acetyl-CoA</name>
        <dbReference type="ChEBI" id="CHEBI:57288"/>
        <label>1</label>
    </ligand>
</feature>
<feature type="binding site" evidence="1">
    <location>
        <position position="182"/>
    </location>
    <ligand>
        <name>1D-myo-inositol 2-(L-cysteinylamino)-2-deoxy-alpha-D-glucopyranoside</name>
        <dbReference type="ChEBI" id="CHEBI:58887"/>
    </ligand>
</feature>
<feature type="binding site" evidence="1">
    <location>
        <position position="257"/>
    </location>
    <ligand>
        <name>1D-myo-inositol 2-(L-cysteinylamino)-2-deoxy-alpha-D-glucopyranoside</name>
        <dbReference type="ChEBI" id="CHEBI:58887"/>
    </ligand>
</feature>
<feature type="binding site" evidence="1">
    <location>
        <position position="271"/>
    </location>
    <ligand>
        <name>1D-myo-inositol 2-(L-cysteinylamino)-2-deoxy-alpha-D-glucopyranoside</name>
        <dbReference type="ChEBI" id="CHEBI:58887"/>
    </ligand>
</feature>
<feature type="binding site" evidence="1">
    <location>
        <begin position="275"/>
        <end position="277"/>
    </location>
    <ligand>
        <name>acetyl-CoA</name>
        <dbReference type="ChEBI" id="CHEBI:57288"/>
        <label>2</label>
    </ligand>
</feature>
<feature type="binding site" evidence="1">
    <location>
        <begin position="282"/>
        <end position="288"/>
    </location>
    <ligand>
        <name>acetyl-CoA</name>
        <dbReference type="ChEBI" id="CHEBI:57288"/>
        <label>2</label>
    </ligand>
</feature>
<feature type="binding site" evidence="1">
    <location>
        <position position="309"/>
    </location>
    <ligand>
        <name>1D-myo-inositol 2-(L-cysteinylamino)-2-deoxy-alpha-D-glucopyranoside</name>
        <dbReference type="ChEBI" id="CHEBI:58887"/>
    </ligand>
</feature>
<feature type="binding site" evidence="1">
    <location>
        <begin position="314"/>
        <end position="319"/>
    </location>
    <ligand>
        <name>acetyl-CoA</name>
        <dbReference type="ChEBI" id="CHEBI:57288"/>
        <label>2</label>
    </ligand>
</feature>
<keyword id="KW-0012">Acyltransferase</keyword>
<keyword id="KW-1185">Reference proteome</keyword>
<keyword id="KW-0677">Repeat</keyword>
<keyword id="KW-0808">Transferase</keyword>
<gene>
    <name evidence="1" type="primary">mshD</name>
    <name type="ordered locus">Sros_0893</name>
</gene>
<protein>
    <recommendedName>
        <fullName evidence="1">Mycothiol acetyltransferase</fullName>
        <shortName evidence="1">MSH acetyltransferase</shortName>
        <ecNumber evidence="1">2.3.1.189</ecNumber>
    </recommendedName>
    <alternativeName>
        <fullName evidence="1">Mycothiol synthase</fullName>
    </alternativeName>
</protein>
<proteinExistence type="inferred from homology"/>
<accession>D2B7W7</accession>
<reference key="1">
    <citation type="journal article" date="2010" name="Stand. Genomic Sci.">
        <title>Complete genome sequence of Streptosporangium roseum type strain (NI 9100).</title>
        <authorList>
            <person name="Nolan M."/>
            <person name="Sikorski J."/>
            <person name="Jando M."/>
            <person name="Lucas S."/>
            <person name="Lapidus A."/>
            <person name="Glavina Del Rio T."/>
            <person name="Chen F."/>
            <person name="Tice H."/>
            <person name="Pitluck S."/>
            <person name="Cheng J.F."/>
            <person name="Chertkov O."/>
            <person name="Sims D."/>
            <person name="Meincke L."/>
            <person name="Brettin T."/>
            <person name="Han C."/>
            <person name="Detter J.C."/>
            <person name="Bruce D."/>
            <person name="Goodwin L."/>
            <person name="Land M."/>
            <person name="Hauser L."/>
            <person name="Chang Y.J."/>
            <person name="Jeffries C.D."/>
            <person name="Ivanova N."/>
            <person name="Mavromatis K."/>
            <person name="Mikhailova N."/>
            <person name="Chen A."/>
            <person name="Palaniappan K."/>
            <person name="Chain P."/>
            <person name="Rohde M."/>
            <person name="Goker M."/>
            <person name="Bristow J."/>
            <person name="Eisen J.A."/>
            <person name="Markowitz V."/>
            <person name="Hugenholtz P."/>
            <person name="Kyrpides N.C."/>
            <person name="Klenk H.P."/>
        </authorList>
    </citation>
    <scope>NUCLEOTIDE SEQUENCE [LARGE SCALE GENOMIC DNA]</scope>
    <source>
        <strain>ATCC 12428 / DSM 43021 / JCM 3005 / KCTC 9067 / NCIMB 10171 / NRRL 2505 / NI 9100</strain>
    </source>
</reference>
<sequence length="337" mass="36078">MNARVEHRGRLDEREVAAVLTVVEAATEADGVRPLNEHVMLHLRYGGDERAGAVLLYVGDDLAGYAHVDPTDPVEGPSGELVIHPAFRGQGHGRHLLEAVLDRTGGRLRLWAHGGHPGAEALALSTGFTKIRSLWQMRRSLFAAIPGFELPDGVRLRTFAPGSPDEEAWVALNAKAFAHHPEQGSWTLEDLKRREQEPWFDPAGFFLAERPTGSGDGDVADGGSTDGGPADSGSADGGAGEGGTGDGNRLIGFHWTKVHGDGGHGHEPIGEVYVVGVDPAEQGGGLGRSLTLAGLSHLRARGLAQVMLYVDESNTAAIRLYEKLGFTRWDVDVMYRK</sequence>